<reference key="1">
    <citation type="submission" date="1998-02" db="EMBL/GenBank/DDBJ databases">
        <title>Chloroplast rpl23 gene cluster of Spirogyra maxima (Charophyceae), shared by land plants.</title>
        <authorList>
            <person name="Lee J."/>
            <person name="Manhart J.R."/>
        </authorList>
    </citation>
    <scope>NUCLEOTIDE SEQUENCE [GENOMIC DNA]</scope>
    <source>
        <strain>UTEX LB 2495</strain>
    </source>
</reference>
<evidence type="ECO:0000250" key="1"/>
<evidence type="ECO:0000305" key="2"/>
<gene>
    <name type="primary">rpl23</name>
</gene>
<protein>
    <recommendedName>
        <fullName evidence="2">Large ribosomal subunit protein uL23c</fullName>
    </recommendedName>
    <alternativeName>
        <fullName>50S ribosomal protein L23, chloroplastic</fullName>
    </alternativeName>
</protein>
<geneLocation type="chloroplast"/>
<proteinExistence type="inferred from homology"/>
<comment type="function">
    <text evidence="1">Binds to 23S rRNA.</text>
</comment>
<comment type="subunit">
    <text evidence="1">Part of the 50S ribosomal subunit.</text>
</comment>
<comment type="subcellular location">
    <subcellularLocation>
        <location>Plastid</location>
        <location>Chloroplast</location>
    </subcellularLocation>
</comment>
<comment type="similarity">
    <text evidence="2">Belongs to the universal ribosomal protein uL23 family.</text>
</comment>
<feature type="chain" id="PRO_0000272935" description="Large ribosomal subunit protein uL23c">
    <location>
        <begin position="1"/>
        <end position="88"/>
    </location>
</feature>
<accession>O98451</accession>
<keyword id="KW-0150">Chloroplast</keyword>
<keyword id="KW-0934">Plastid</keyword>
<keyword id="KW-0687">Ribonucleoprotein</keyword>
<keyword id="KW-0689">Ribosomal protein</keyword>
<keyword id="KW-0694">RNA-binding</keyword>
<keyword id="KW-0699">rRNA-binding</keyword>
<organism>
    <name type="scientific">Spirogyra maxima</name>
    <name type="common">Green alga</name>
    <dbReference type="NCBI Taxonomy" id="3180"/>
    <lineage>
        <taxon>Eukaryota</taxon>
        <taxon>Viridiplantae</taxon>
        <taxon>Streptophyta</taxon>
        <taxon>Zygnematophyceae</taxon>
        <taxon>Zygnematophycidae</taxon>
        <taxon>Zygnematales</taxon>
        <taxon>Zygnemataceae</taxon>
        <taxon>Spirogyra</taxon>
    </lineage>
</organism>
<sequence>MDKIKYRPIGMKAIRLLERRQYTFDVDVKATKTEVKRWIEGFFSVKVVGMNSHRPPKKKKRMGSVIGYPVRYKRMIVTLKVGDSIPLS</sequence>
<name>RK23_SPIMX</name>
<dbReference type="EMBL" id="AF050665">
    <property type="protein sequence ID" value="AAC95307.1"/>
    <property type="molecule type" value="Genomic_DNA"/>
</dbReference>
<dbReference type="RefSeq" id="YP_009258389.1">
    <property type="nucleotide sequence ID" value="NC_030355.1"/>
</dbReference>
<dbReference type="SMR" id="O98451"/>
<dbReference type="GeneID" id="27984734"/>
<dbReference type="GO" id="GO:0009507">
    <property type="term" value="C:chloroplast"/>
    <property type="evidence" value="ECO:0007669"/>
    <property type="project" value="UniProtKB-SubCell"/>
</dbReference>
<dbReference type="GO" id="GO:1990904">
    <property type="term" value="C:ribonucleoprotein complex"/>
    <property type="evidence" value="ECO:0007669"/>
    <property type="project" value="UniProtKB-KW"/>
</dbReference>
<dbReference type="GO" id="GO:0005840">
    <property type="term" value="C:ribosome"/>
    <property type="evidence" value="ECO:0007669"/>
    <property type="project" value="UniProtKB-KW"/>
</dbReference>
<dbReference type="GO" id="GO:0019843">
    <property type="term" value="F:rRNA binding"/>
    <property type="evidence" value="ECO:0007669"/>
    <property type="project" value="UniProtKB-UniRule"/>
</dbReference>
<dbReference type="GO" id="GO:0003735">
    <property type="term" value="F:structural constituent of ribosome"/>
    <property type="evidence" value="ECO:0007669"/>
    <property type="project" value="InterPro"/>
</dbReference>
<dbReference type="GO" id="GO:0006412">
    <property type="term" value="P:translation"/>
    <property type="evidence" value="ECO:0007669"/>
    <property type="project" value="UniProtKB-UniRule"/>
</dbReference>
<dbReference type="Gene3D" id="3.30.70.330">
    <property type="match status" value="1"/>
</dbReference>
<dbReference type="HAMAP" id="MF_01369_B">
    <property type="entry name" value="Ribosomal_uL23_B"/>
    <property type="match status" value="1"/>
</dbReference>
<dbReference type="InterPro" id="IPR012677">
    <property type="entry name" value="Nucleotide-bd_a/b_plait_sf"/>
</dbReference>
<dbReference type="InterPro" id="IPR013025">
    <property type="entry name" value="Ribosomal_uL23-like"/>
</dbReference>
<dbReference type="InterPro" id="IPR012678">
    <property type="entry name" value="Ribosomal_uL23/eL15/eS24_sf"/>
</dbReference>
<dbReference type="PANTHER" id="PTHR11620">
    <property type="entry name" value="60S RIBOSOMAL PROTEIN L23A"/>
    <property type="match status" value="1"/>
</dbReference>
<dbReference type="Pfam" id="PF00276">
    <property type="entry name" value="Ribosomal_L23"/>
    <property type="match status" value="1"/>
</dbReference>
<dbReference type="SUPFAM" id="SSF54189">
    <property type="entry name" value="Ribosomal proteins S24e, L23 and L15e"/>
    <property type="match status" value="1"/>
</dbReference>